<reference key="1">
    <citation type="journal article" date="2001" name="Nature">
        <title>Genome sequence of Yersinia pestis, the causative agent of plague.</title>
        <authorList>
            <person name="Parkhill J."/>
            <person name="Wren B.W."/>
            <person name="Thomson N.R."/>
            <person name="Titball R.W."/>
            <person name="Holden M.T.G."/>
            <person name="Prentice M.B."/>
            <person name="Sebaihia M."/>
            <person name="James K.D."/>
            <person name="Churcher C.M."/>
            <person name="Mungall K.L."/>
            <person name="Baker S."/>
            <person name="Basham D."/>
            <person name="Bentley S.D."/>
            <person name="Brooks K."/>
            <person name="Cerdeno-Tarraga A.-M."/>
            <person name="Chillingworth T."/>
            <person name="Cronin A."/>
            <person name="Davies R.M."/>
            <person name="Davis P."/>
            <person name="Dougan G."/>
            <person name="Feltwell T."/>
            <person name="Hamlin N."/>
            <person name="Holroyd S."/>
            <person name="Jagels K."/>
            <person name="Karlyshev A.V."/>
            <person name="Leather S."/>
            <person name="Moule S."/>
            <person name="Oyston P.C.F."/>
            <person name="Quail M.A."/>
            <person name="Rutherford K.M."/>
            <person name="Simmonds M."/>
            <person name="Skelton J."/>
            <person name="Stevens K."/>
            <person name="Whitehead S."/>
            <person name="Barrell B.G."/>
        </authorList>
    </citation>
    <scope>NUCLEOTIDE SEQUENCE [LARGE SCALE GENOMIC DNA]</scope>
    <source>
        <strain>CO-92 / Biovar Orientalis</strain>
    </source>
</reference>
<reference key="2">
    <citation type="journal article" date="2002" name="J. Bacteriol.">
        <title>Genome sequence of Yersinia pestis KIM.</title>
        <authorList>
            <person name="Deng W."/>
            <person name="Burland V."/>
            <person name="Plunkett G. III"/>
            <person name="Boutin A."/>
            <person name="Mayhew G.F."/>
            <person name="Liss P."/>
            <person name="Perna N.T."/>
            <person name="Rose D.J."/>
            <person name="Mau B."/>
            <person name="Zhou S."/>
            <person name="Schwartz D.C."/>
            <person name="Fetherston J.D."/>
            <person name="Lindler L.E."/>
            <person name="Brubaker R.R."/>
            <person name="Plano G.V."/>
            <person name="Straley S.C."/>
            <person name="McDonough K.A."/>
            <person name="Nilles M.L."/>
            <person name="Matson J.S."/>
            <person name="Blattner F.R."/>
            <person name="Perry R.D."/>
        </authorList>
    </citation>
    <scope>NUCLEOTIDE SEQUENCE [LARGE SCALE GENOMIC DNA]</scope>
    <source>
        <strain>KIM10+ / Biovar Mediaevalis</strain>
    </source>
</reference>
<reference key="3">
    <citation type="journal article" date="2004" name="DNA Res.">
        <title>Complete genome sequence of Yersinia pestis strain 91001, an isolate avirulent to humans.</title>
        <authorList>
            <person name="Song Y."/>
            <person name="Tong Z."/>
            <person name="Wang J."/>
            <person name="Wang L."/>
            <person name="Guo Z."/>
            <person name="Han Y."/>
            <person name="Zhang J."/>
            <person name="Pei D."/>
            <person name="Zhou D."/>
            <person name="Qin H."/>
            <person name="Pang X."/>
            <person name="Han Y."/>
            <person name="Zhai J."/>
            <person name="Li M."/>
            <person name="Cui B."/>
            <person name="Qi Z."/>
            <person name="Jin L."/>
            <person name="Dai R."/>
            <person name="Chen F."/>
            <person name="Li S."/>
            <person name="Ye C."/>
            <person name="Du Z."/>
            <person name="Lin W."/>
            <person name="Wang J."/>
            <person name="Yu J."/>
            <person name="Yang H."/>
            <person name="Wang J."/>
            <person name="Huang P."/>
            <person name="Yang R."/>
        </authorList>
    </citation>
    <scope>NUCLEOTIDE SEQUENCE [LARGE SCALE GENOMIC DNA]</scope>
    <source>
        <strain>91001 / Biovar Mediaevalis</strain>
    </source>
</reference>
<protein>
    <recommendedName>
        <fullName evidence="1">Guanidinium exporter</fullName>
    </recommendedName>
</protein>
<sequence>MAWIILVIAGLLEVIWAIGLKYSHGFSRLTPSIITLVAMAASVFLLAYAMKSLPAGTAYAVWTGIGAVGTAILGIVLLGESASLARILSLGLILAGIIGLKLAS</sequence>
<dbReference type="EMBL" id="AL590842">
    <property type="protein sequence ID" value="CAL19037.1"/>
    <property type="molecule type" value="Genomic_DNA"/>
</dbReference>
<dbReference type="EMBL" id="AE009952">
    <property type="protein sequence ID" value="AAM84201.1"/>
    <property type="status" value="ALT_INIT"/>
    <property type="molecule type" value="Genomic_DNA"/>
</dbReference>
<dbReference type="EMBL" id="AE017042">
    <property type="protein sequence ID" value="AAS60781.1"/>
    <property type="status" value="ALT_INIT"/>
    <property type="molecule type" value="Genomic_DNA"/>
</dbReference>
<dbReference type="PIR" id="AC0044">
    <property type="entry name" value="AC0044"/>
</dbReference>
<dbReference type="RefSeq" id="WP_002228124.1">
    <property type="nucleotide sequence ID" value="NZ_WUCM01000014.1"/>
</dbReference>
<dbReference type="RefSeq" id="YP_002345433.1">
    <property type="nucleotide sequence ID" value="NC_003143.1"/>
</dbReference>
<dbReference type="SMR" id="Q8D1E4"/>
<dbReference type="STRING" id="214092.YPO0355"/>
<dbReference type="PaxDb" id="214092-YPO0355"/>
<dbReference type="DNASU" id="1145560"/>
<dbReference type="EnsemblBacteria" id="AAS60781">
    <property type="protein sequence ID" value="AAS60781"/>
    <property type="gene ID" value="YP_0511"/>
</dbReference>
<dbReference type="GeneID" id="96663908"/>
<dbReference type="KEGG" id="ype:YPO0355"/>
<dbReference type="KEGG" id="ypj:CH55_3409"/>
<dbReference type="KEGG" id="ypk:y0613"/>
<dbReference type="KEGG" id="ypl:CH46_560"/>
<dbReference type="KEGG" id="ypm:YP_0511"/>
<dbReference type="KEGG" id="ypv:BZ15_3217"/>
<dbReference type="KEGG" id="ypw:CH59_1507"/>
<dbReference type="PATRIC" id="fig|214092.21.peg.591"/>
<dbReference type="eggNOG" id="COG2076">
    <property type="taxonomic scope" value="Bacteria"/>
</dbReference>
<dbReference type="HOGENOM" id="CLU_133067_1_2_6"/>
<dbReference type="OMA" id="CLWMAQK"/>
<dbReference type="OrthoDB" id="9808638at2"/>
<dbReference type="Proteomes" id="UP000000815">
    <property type="component" value="Chromosome"/>
</dbReference>
<dbReference type="Proteomes" id="UP000001019">
    <property type="component" value="Chromosome"/>
</dbReference>
<dbReference type="Proteomes" id="UP000002490">
    <property type="component" value="Chromosome"/>
</dbReference>
<dbReference type="GO" id="GO:0005886">
    <property type="term" value="C:plasma membrane"/>
    <property type="evidence" value="ECO:0000318"/>
    <property type="project" value="GO_Central"/>
</dbReference>
<dbReference type="GO" id="GO:0022857">
    <property type="term" value="F:transmembrane transporter activity"/>
    <property type="evidence" value="ECO:0000318"/>
    <property type="project" value="GO_Central"/>
</dbReference>
<dbReference type="GO" id="GO:0006811">
    <property type="term" value="P:monoatomic ion transport"/>
    <property type="evidence" value="ECO:0007669"/>
    <property type="project" value="UniProtKB-KW"/>
</dbReference>
<dbReference type="GO" id="GO:0055085">
    <property type="term" value="P:transmembrane transport"/>
    <property type="evidence" value="ECO:0000318"/>
    <property type="project" value="GO_Central"/>
</dbReference>
<dbReference type="FunFam" id="1.10.3730.20:FF:000001">
    <property type="entry name" value="Quaternary ammonium compound resistance transporter SugE"/>
    <property type="match status" value="1"/>
</dbReference>
<dbReference type="Gene3D" id="1.10.3730.20">
    <property type="match status" value="1"/>
</dbReference>
<dbReference type="InterPro" id="IPR000390">
    <property type="entry name" value="Small_drug/metabolite_transptr"/>
</dbReference>
<dbReference type="InterPro" id="IPR045324">
    <property type="entry name" value="Small_multidrug_res"/>
</dbReference>
<dbReference type="NCBIfam" id="NF008512">
    <property type="entry name" value="PRK11431.1"/>
    <property type="match status" value="1"/>
</dbReference>
<dbReference type="PANTHER" id="PTHR30561:SF0">
    <property type="entry name" value="GUANIDINIUM EXPORTER"/>
    <property type="match status" value="1"/>
</dbReference>
<dbReference type="PANTHER" id="PTHR30561">
    <property type="entry name" value="SMR FAMILY PROTON-DEPENDENT DRUG EFFLUX TRANSPORTER SUGE"/>
    <property type="match status" value="1"/>
</dbReference>
<dbReference type="Pfam" id="PF00893">
    <property type="entry name" value="Multi_Drug_Res"/>
    <property type="match status" value="1"/>
</dbReference>
<dbReference type="SUPFAM" id="SSF103481">
    <property type="entry name" value="Multidrug resistance efflux transporter EmrE"/>
    <property type="match status" value="1"/>
</dbReference>
<keyword id="KW-0997">Cell inner membrane</keyword>
<keyword id="KW-1003">Cell membrane</keyword>
<keyword id="KW-0406">Ion transport</keyword>
<keyword id="KW-0472">Membrane</keyword>
<keyword id="KW-1185">Reference proteome</keyword>
<keyword id="KW-0812">Transmembrane</keyword>
<keyword id="KW-1133">Transmembrane helix</keyword>
<keyword id="KW-0813">Transport</keyword>
<feature type="chain" id="PRO_0000108108" description="Guanidinium exporter">
    <location>
        <begin position="1"/>
        <end position="104"/>
    </location>
</feature>
<feature type="topological domain" description="Cytoplasmic" evidence="2">
    <location>
        <position position="1"/>
    </location>
</feature>
<feature type="transmembrane region" description="Helical" evidence="2">
    <location>
        <begin position="2"/>
        <end position="19"/>
    </location>
</feature>
<feature type="topological domain" description="Periplasmic" evidence="2">
    <location>
        <begin position="20"/>
        <end position="28"/>
    </location>
</feature>
<feature type="transmembrane region" description="Helical" evidence="2">
    <location>
        <begin position="29"/>
        <end position="48"/>
    </location>
</feature>
<feature type="topological domain" description="Cytoplasmic" evidence="2">
    <location>
        <begin position="49"/>
        <end position="54"/>
    </location>
</feature>
<feature type="transmembrane region" description="Helical" evidence="2">
    <location>
        <begin position="55"/>
        <end position="77"/>
    </location>
</feature>
<feature type="topological domain" description="Periplasmic" evidence="2">
    <location>
        <begin position="78"/>
        <end position="81"/>
    </location>
</feature>
<feature type="transmembrane region" description="Helical" evidence="2">
    <location>
        <begin position="82"/>
        <end position="100"/>
    </location>
</feature>
<feature type="topological domain" description="Cytoplasmic" evidence="2">
    <location>
        <begin position="101"/>
        <end position="104"/>
    </location>
</feature>
<name>GDX_YERPE</name>
<evidence type="ECO:0000250" key="1">
    <source>
        <dbReference type="UniProtKB" id="P69937"/>
    </source>
</evidence>
<evidence type="ECO:0000255" key="2"/>
<evidence type="ECO:0000305" key="3"/>
<gene>
    <name evidence="1" type="primary">gdx</name>
    <name type="synonym">sugE</name>
    <name type="ordered locus">YPO0355</name>
    <name type="ordered locus">y0613</name>
    <name type="ordered locus">YP_0511</name>
</gene>
<proteinExistence type="inferred from homology"/>
<organism>
    <name type="scientific">Yersinia pestis</name>
    <dbReference type="NCBI Taxonomy" id="632"/>
    <lineage>
        <taxon>Bacteria</taxon>
        <taxon>Pseudomonadati</taxon>
        <taxon>Pseudomonadota</taxon>
        <taxon>Gammaproteobacteria</taxon>
        <taxon>Enterobacterales</taxon>
        <taxon>Yersiniaceae</taxon>
        <taxon>Yersinia</taxon>
    </lineage>
</organism>
<comment type="function">
    <text evidence="1">Guanidinium ion exporter. Couples guanidinium export to the proton motive force, exchanging one guanidinium ion for two protons.</text>
</comment>
<comment type="subcellular location">
    <subcellularLocation>
        <location evidence="1">Cell inner membrane</location>
        <topology evidence="1">Multi-pass membrane protein</topology>
    </subcellularLocation>
</comment>
<comment type="similarity">
    <text evidence="3">Belongs to the drug/metabolite transporter (DMT) superfamily. Small multidrug resistance (SMR) (TC 2.A.7.1) family. Gdx/SugE subfamily.</text>
</comment>
<comment type="sequence caution" evidence="3">
    <conflict type="erroneous initiation">
        <sequence resource="EMBL-CDS" id="AAM84201"/>
    </conflict>
</comment>
<comment type="sequence caution" evidence="3">
    <conflict type="erroneous initiation">
        <sequence resource="EMBL-CDS" id="AAS60781"/>
    </conflict>
</comment>
<accession>Q8D1E4</accession>
<accession>Q0WJV5</accession>
<accession>Q74XC5</accession>
<accession>Q8ZIX9</accession>